<comment type="function">
    <text evidence="1">Catalyzes the conversion of uracil and 5-phospho-alpha-D-ribose 1-diphosphate (PRPP) to UMP and diphosphate.</text>
</comment>
<comment type="catalytic activity">
    <reaction evidence="1">
        <text>UMP + diphosphate = 5-phospho-alpha-D-ribose 1-diphosphate + uracil</text>
        <dbReference type="Rhea" id="RHEA:13017"/>
        <dbReference type="ChEBI" id="CHEBI:17568"/>
        <dbReference type="ChEBI" id="CHEBI:33019"/>
        <dbReference type="ChEBI" id="CHEBI:57865"/>
        <dbReference type="ChEBI" id="CHEBI:58017"/>
        <dbReference type="EC" id="2.4.2.9"/>
    </reaction>
</comment>
<comment type="cofactor">
    <cofactor evidence="1">
        <name>Mg(2+)</name>
        <dbReference type="ChEBI" id="CHEBI:18420"/>
    </cofactor>
    <text evidence="1">Binds 1 Mg(2+) ion per subunit. The magnesium is bound as Mg-PRPP.</text>
</comment>
<comment type="activity regulation">
    <text evidence="1">Allosterically activated by GTP.</text>
</comment>
<comment type="pathway">
    <text evidence="1">Pyrimidine metabolism; UMP biosynthesis via salvage pathway; UMP from uracil: step 1/1.</text>
</comment>
<comment type="similarity">
    <text evidence="1">Belongs to the UPRTase family.</text>
</comment>
<accession>Q4JAV0</accession>
<sequence>MTLYVLSKPILLHFLTQLRSKNIDQISFRKNLVKLGRIIGYEIVNTLDYESIDVETPLGTKAKGIYIYDLENILIISILRAATPFVEGLLKALPTARLGVIAASRKEKEVQVGYPEDIPVDVYYMKIPQVSHKDTVIIADPMIATGSTMRKAIKSIVNSQPKRIYIASVIISEYGLKRLMEEFPFVDIFTISVDPEIDNRGFILPGLGDAGDRAFG</sequence>
<dbReference type="EC" id="2.4.2.9" evidence="1"/>
<dbReference type="EMBL" id="CP000077">
    <property type="protein sequence ID" value="AAY80079.1"/>
    <property type="molecule type" value="Genomic_DNA"/>
</dbReference>
<dbReference type="RefSeq" id="WP_011277581.1">
    <property type="nucleotide sequence ID" value="NC_007181.1"/>
</dbReference>
<dbReference type="SMR" id="Q4JAV0"/>
<dbReference type="STRING" id="330779.Saci_0699"/>
<dbReference type="GeneID" id="14551214"/>
<dbReference type="GeneID" id="78441041"/>
<dbReference type="KEGG" id="sai:Saci_0699"/>
<dbReference type="PATRIC" id="fig|330779.12.peg.667"/>
<dbReference type="eggNOG" id="arCOG04128">
    <property type="taxonomic scope" value="Archaea"/>
</dbReference>
<dbReference type="HOGENOM" id="CLU_067096_2_0_2"/>
<dbReference type="UniPathway" id="UPA00574">
    <property type="reaction ID" value="UER00636"/>
</dbReference>
<dbReference type="Proteomes" id="UP000001018">
    <property type="component" value="Chromosome"/>
</dbReference>
<dbReference type="GO" id="GO:0005525">
    <property type="term" value="F:GTP binding"/>
    <property type="evidence" value="ECO:0007669"/>
    <property type="project" value="UniProtKB-KW"/>
</dbReference>
<dbReference type="GO" id="GO:0000287">
    <property type="term" value="F:magnesium ion binding"/>
    <property type="evidence" value="ECO:0007669"/>
    <property type="project" value="UniProtKB-UniRule"/>
</dbReference>
<dbReference type="GO" id="GO:0004845">
    <property type="term" value="F:uracil phosphoribosyltransferase activity"/>
    <property type="evidence" value="ECO:0007669"/>
    <property type="project" value="UniProtKB-UniRule"/>
</dbReference>
<dbReference type="GO" id="GO:0044206">
    <property type="term" value="P:UMP salvage"/>
    <property type="evidence" value="ECO:0007669"/>
    <property type="project" value="UniProtKB-UniRule"/>
</dbReference>
<dbReference type="GO" id="GO:0006223">
    <property type="term" value="P:uracil salvage"/>
    <property type="evidence" value="ECO:0007669"/>
    <property type="project" value="InterPro"/>
</dbReference>
<dbReference type="CDD" id="cd06223">
    <property type="entry name" value="PRTases_typeI"/>
    <property type="match status" value="1"/>
</dbReference>
<dbReference type="Gene3D" id="3.40.50.2020">
    <property type="match status" value="1"/>
</dbReference>
<dbReference type="HAMAP" id="MF_01218_A">
    <property type="entry name" value="Upp_A"/>
    <property type="match status" value="1"/>
</dbReference>
<dbReference type="InterPro" id="IPR000836">
    <property type="entry name" value="PRibTrfase_dom"/>
</dbReference>
<dbReference type="InterPro" id="IPR029057">
    <property type="entry name" value="PRTase-like"/>
</dbReference>
<dbReference type="InterPro" id="IPR034331">
    <property type="entry name" value="Upp_A"/>
</dbReference>
<dbReference type="InterPro" id="IPR005765">
    <property type="entry name" value="Ura_phspho_trans"/>
</dbReference>
<dbReference type="NCBIfam" id="NF001097">
    <property type="entry name" value="PRK00129.1"/>
    <property type="match status" value="1"/>
</dbReference>
<dbReference type="NCBIfam" id="TIGR01091">
    <property type="entry name" value="upp"/>
    <property type="match status" value="1"/>
</dbReference>
<dbReference type="Pfam" id="PF14681">
    <property type="entry name" value="UPRTase"/>
    <property type="match status" value="1"/>
</dbReference>
<dbReference type="SUPFAM" id="SSF53271">
    <property type="entry name" value="PRTase-like"/>
    <property type="match status" value="1"/>
</dbReference>
<organism>
    <name type="scientific">Sulfolobus acidocaldarius (strain ATCC 33909 / DSM 639 / JCM 8929 / NBRC 15157 / NCIMB 11770)</name>
    <dbReference type="NCBI Taxonomy" id="330779"/>
    <lineage>
        <taxon>Archaea</taxon>
        <taxon>Thermoproteota</taxon>
        <taxon>Thermoprotei</taxon>
        <taxon>Sulfolobales</taxon>
        <taxon>Sulfolobaceae</taxon>
        <taxon>Sulfolobus</taxon>
    </lineage>
</organism>
<reference key="1">
    <citation type="journal article" date="2005" name="J. Bacteriol.">
        <title>The genome of Sulfolobus acidocaldarius, a model organism of the Crenarchaeota.</title>
        <authorList>
            <person name="Chen L."/>
            <person name="Bruegger K."/>
            <person name="Skovgaard M."/>
            <person name="Redder P."/>
            <person name="She Q."/>
            <person name="Torarinsson E."/>
            <person name="Greve B."/>
            <person name="Awayez M."/>
            <person name="Zibat A."/>
            <person name="Klenk H.-P."/>
            <person name="Garrett R.A."/>
        </authorList>
    </citation>
    <scope>NUCLEOTIDE SEQUENCE [LARGE SCALE GENOMIC DNA]</scope>
    <source>
        <strain>ATCC 33909 / DSM 639 / JCM 8929 / NBRC 15157 / NCIMB 11770</strain>
    </source>
</reference>
<feature type="chain" id="PRO_0000120926" description="Uracil phosphoribosyltransferase">
    <location>
        <begin position="1"/>
        <end position="216"/>
    </location>
</feature>
<feature type="binding site" evidence="1">
    <location>
        <begin position="30"/>
        <end position="34"/>
    </location>
    <ligand>
        <name>GTP</name>
        <dbReference type="ChEBI" id="CHEBI:37565"/>
    </ligand>
</feature>
<feature type="binding site" evidence="1">
    <location>
        <position position="80"/>
    </location>
    <ligand>
        <name>5-phospho-alpha-D-ribose 1-diphosphate</name>
        <dbReference type="ChEBI" id="CHEBI:58017"/>
    </ligand>
</feature>
<feature type="binding site" evidence="1">
    <location>
        <position position="105"/>
    </location>
    <ligand>
        <name>5-phospho-alpha-D-ribose 1-diphosphate</name>
        <dbReference type="ChEBI" id="CHEBI:58017"/>
    </ligand>
</feature>
<feature type="binding site" evidence="1">
    <location>
        <begin position="140"/>
        <end position="148"/>
    </location>
    <ligand>
        <name>5-phospho-alpha-D-ribose 1-diphosphate</name>
        <dbReference type="ChEBI" id="CHEBI:58017"/>
    </ligand>
</feature>
<feature type="binding site" evidence="1">
    <location>
        <position position="203"/>
    </location>
    <ligand>
        <name>uracil</name>
        <dbReference type="ChEBI" id="CHEBI:17568"/>
    </ligand>
</feature>
<feature type="binding site" evidence="1">
    <location>
        <begin position="208"/>
        <end position="210"/>
    </location>
    <ligand>
        <name>uracil</name>
        <dbReference type="ChEBI" id="CHEBI:17568"/>
    </ligand>
</feature>
<feature type="binding site" evidence="1">
    <location>
        <position position="209"/>
    </location>
    <ligand>
        <name>5-phospho-alpha-D-ribose 1-diphosphate</name>
        <dbReference type="ChEBI" id="CHEBI:58017"/>
    </ligand>
</feature>
<evidence type="ECO:0000255" key="1">
    <source>
        <dbReference type="HAMAP-Rule" id="MF_01218"/>
    </source>
</evidence>
<keyword id="KW-0021">Allosteric enzyme</keyword>
<keyword id="KW-0328">Glycosyltransferase</keyword>
<keyword id="KW-0342">GTP-binding</keyword>
<keyword id="KW-0460">Magnesium</keyword>
<keyword id="KW-0547">Nucleotide-binding</keyword>
<keyword id="KW-1185">Reference proteome</keyword>
<keyword id="KW-0808">Transferase</keyword>
<protein>
    <recommendedName>
        <fullName evidence="1">Uracil phosphoribosyltransferase</fullName>
        <ecNumber evidence="1">2.4.2.9</ecNumber>
    </recommendedName>
    <alternativeName>
        <fullName evidence="1">UMP pyrophosphorylase</fullName>
    </alternativeName>
    <alternativeName>
        <fullName evidence="1">UPRTase</fullName>
    </alternativeName>
</protein>
<name>UPP_SULAC</name>
<gene>
    <name evidence="1" type="primary">upp</name>
    <name type="ordered locus">Saci_0699</name>
</gene>
<proteinExistence type="inferred from homology"/>